<protein>
    <recommendedName>
        <fullName evidence="2">D-alanine--D-alanine ligase</fullName>
        <ecNumber evidence="2">6.3.2.4</ecNumber>
    </recommendedName>
    <alternativeName>
        <fullName evidence="2">D-Ala-D-Ala ligase</fullName>
    </alternativeName>
    <alternativeName>
        <fullName evidence="2">D-alanylalanine synthetase</fullName>
    </alternativeName>
</protein>
<evidence type="ECO:0000250" key="1"/>
<evidence type="ECO:0000255" key="2">
    <source>
        <dbReference type="HAMAP-Rule" id="MF_00047"/>
    </source>
</evidence>
<reference key="1">
    <citation type="journal article" date="2003" name="Nat. Genet.">
        <title>Comparative analysis of the genome sequences of Bordetella pertussis, Bordetella parapertussis and Bordetella bronchiseptica.</title>
        <authorList>
            <person name="Parkhill J."/>
            <person name="Sebaihia M."/>
            <person name="Preston A."/>
            <person name="Murphy L.D."/>
            <person name="Thomson N.R."/>
            <person name="Harris D.E."/>
            <person name="Holden M.T.G."/>
            <person name="Churcher C.M."/>
            <person name="Bentley S.D."/>
            <person name="Mungall K.L."/>
            <person name="Cerdeno-Tarraga A.-M."/>
            <person name="Temple L."/>
            <person name="James K.D."/>
            <person name="Harris B."/>
            <person name="Quail M.A."/>
            <person name="Achtman M."/>
            <person name="Atkin R."/>
            <person name="Baker S."/>
            <person name="Basham D."/>
            <person name="Bason N."/>
            <person name="Cherevach I."/>
            <person name="Chillingworth T."/>
            <person name="Collins M."/>
            <person name="Cronin A."/>
            <person name="Davis P."/>
            <person name="Doggett J."/>
            <person name="Feltwell T."/>
            <person name="Goble A."/>
            <person name="Hamlin N."/>
            <person name="Hauser H."/>
            <person name="Holroyd S."/>
            <person name="Jagels K."/>
            <person name="Leather S."/>
            <person name="Moule S."/>
            <person name="Norberczak H."/>
            <person name="O'Neil S."/>
            <person name="Ormond D."/>
            <person name="Price C."/>
            <person name="Rabbinowitsch E."/>
            <person name="Rutter S."/>
            <person name="Sanders M."/>
            <person name="Saunders D."/>
            <person name="Seeger K."/>
            <person name="Sharp S."/>
            <person name="Simmonds M."/>
            <person name="Skelton J."/>
            <person name="Squares R."/>
            <person name="Squares S."/>
            <person name="Stevens K."/>
            <person name="Unwin L."/>
            <person name="Whitehead S."/>
            <person name="Barrell B.G."/>
            <person name="Maskell D.J."/>
        </authorList>
    </citation>
    <scope>NUCLEOTIDE SEQUENCE [LARGE SCALE GENOMIC DNA]</scope>
    <source>
        <strain>12822 / ATCC BAA-587 / NCTC 13253</strain>
    </source>
</reference>
<comment type="function">
    <text evidence="2">Cell wall formation.</text>
</comment>
<comment type="catalytic activity">
    <reaction evidence="2">
        <text>2 D-alanine + ATP = D-alanyl-D-alanine + ADP + phosphate + H(+)</text>
        <dbReference type="Rhea" id="RHEA:11224"/>
        <dbReference type="ChEBI" id="CHEBI:15378"/>
        <dbReference type="ChEBI" id="CHEBI:30616"/>
        <dbReference type="ChEBI" id="CHEBI:43474"/>
        <dbReference type="ChEBI" id="CHEBI:57416"/>
        <dbReference type="ChEBI" id="CHEBI:57822"/>
        <dbReference type="ChEBI" id="CHEBI:456216"/>
        <dbReference type="EC" id="6.3.2.4"/>
    </reaction>
</comment>
<comment type="cofactor">
    <cofactor evidence="1">
        <name>Mg(2+)</name>
        <dbReference type="ChEBI" id="CHEBI:18420"/>
    </cofactor>
    <cofactor evidence="1">
        <name>Mn(2+)</name>
        <dbReference type="ChEBI" id="CHEBI:29035"/>
    </cofactor>
    <text evidence="1">Binds 2 magnesium or manganese ions per subunit.</text>
</comment>
<comment type="pathway">
    <text evidence="2">Cell wall biogenesis; peptidoglycan biosynthesis.</text>
</comment>
<comment type="subcellular location">
    <subcellularLocation>
        <location evidence="2">Cytoplasm</location>
    </subcellularLocation>
</comment>
<comment type="similarity">
    <text evidence="2">Belongs to the D-alanine--D-alanine ligase family.</text>
</comment>
<organism>
    <name type="scientific">Bordetella parapertussis (strain 12822 / ATCC BAA-587 / NCTC 13253)</name>
    <dbReference type="NCBI Taxonomy" id="257311"/>
    <lineage>
        <taxon>Bacteria</taxon>
        <taxon>Pseudomonadati</taxon>
        <taxon>Pseudomonadota</taxon>
        <taxon>Betaproteobacteria</taxon>
        <taxon>Burkholderiales</taxon>
        <taxon>Alcaligenaceae</taxon>
        <taxon>Bordetella</taxon>
    </lineage>
</organism>
<sequence>MSKQFGKVGVLYGGRSAEREVSLMSGKGVHEALLSAGVDAHLFDTGERSLADLAAAGFERVFIALHGRYGEDGTLQGALELLGIPYTGSGPLASSLSMDKIMTKRVWLQHGLPTPAFEVLGGSTELRLVPDRLGLPLILKPPHEGSTVGITKVAGYSDMKAAYELAARFDAEVLAEQFITGRELTVAVLGSGAAARALPVIEIVAPGGNYDYEHKYFSDDTQYFCPADLPADVAADVAAVAERAYAALGCEGWGRVDFILDRENRPWLLEMNTSPGMTGHSLVPMAARAVGMSYADLCVAILAKAACKVRSPARQD</sequence>
<accession>Q7W4B6</accession>
<gene>
    <name evidence="2" type="primary">ddl</name>
    <name type="synonym">ddlB</name>
    <name type="ordered locus">BPP3750</name>
</gene>
<dbReference type="EC" id="6.3.2.4" evidence="2"/>
<dbReference type="EMBL" id="BX640434">
    <property type="protein sequence ID" value="CAE39033.1"/>
    <property type="molecule type" value="Genomic_DNA"/>
</dbReference>
<dbReference type="RefSeq" id="WP_010929226.1">
    <property type="nucleotide sequence ID" value="NC_002928.3"/>
</dbReference>
<dbReference type="SMR" id="Q7W4B6"/>
<dbReference type="KEGG" id="bpa:BPP3750"/>
<dbReference type="HOGENOM" id="CLU_039268_1_2_4"/>
<dbReference type="UniPathway" id="UPA00219"/>
<dbReference type="Proteomes" id="UP000001421">
    <property type="component" value="Chromosome"/>
</dbReference>
<dbReference type="GO" id="GO:0005829">
    <property type="term" value="C:cytosol"/>
    <property type="evidence" value="ECO:0007669"/>
    <property type="project" value="TreeGrafter"/>
</dbReference>
<dbReference type="GO" id="GO:0005524">
    <property type="term" value="F:ATP binding"/>
    <property type="evidence" value="ECO:0007669"/>
    <property type="project" value="UniProtKB-KW"/>
</dbReference>
<dbReference type="GO" id="GO:0008716">
    <property type="term" value="F:D-alanine-D-alanine ligase activity"/>
    <property type="evidence" value="ECO:0007669"/>
    <property type="project" value="UniProtKB-UniRule"/>
</dbReference>
<dbReference type="GO" id="GO:0046872">
    <property type="term" value="F:metal ion binding"/>
    <property type="evidence" value="ECO:0007669"/>
    <property type="project" value="UniProtKB-KW"/>
</dbReference>
<dbReference type="GO" id="GO:0071555">
    <property type="term" value="P:cell wall organization"/>
    <property type="evidence" value="ECO:0007669"/>
    <property type="project" value="UniProtKB-KW"/>
</dbReference>
<dbReference type="GO" id="GO:0009252">
    <property type="term" value="P:peptidoglycan biosynthetic process"/>
    <property type="evidence" value="ECO:0007669"/>
    <property type="project" value="UniProtKB-UniRule"/>
</dbReference>
<dbReference type="GO" id="GO:0008360">
    <property type="term" value="P:regulation of cell shape"/>
    <property type="evidence" value="ECO:0007669"/>
    <property type="project" value="UniProtKB-KW"/>
</dbReference>
<dbReference type="FunFam" id="3.30.470.20:FF:000008">
    <property type="entry name" value="D-alanine--D-alanine ligase"/>
    <property type="match status" value="1"/>
</dbReference>
<dbReference type="FunFam" id="3.40.50.20:FF:000013">
    <property type="entry name" value="D-alanine--D-alanine ligase"/>
    <property type="match status" value="1"/>
</dbReference>
<dbReference type="Gene3D" id="3.40.50.20">
    <property type="match status" value="1"/>
</dbReference>
<dbReference type="Gene3D" id="3.30.1490.20">
    <property type="entry name" value="ATP-grasp fold, A domain"/>
    <property type="match status" value="1"/>
</dbReference>
<dbReference type="Gene3D" id="3.30.470.20">
    <property type="entry name" value="ATP-grasp fold, B domain"/>
    <property type="match status" value="1"/>
</dbReference>
<dbReference type="HAMAP" id="MF_00047">
    <property type="entry name" value="Dala_Dala_lig"/>
    <property type="match status" value="1"/>
</dbReference>
<dbReference type="InterPro" id="IPR011761">
    <property type="entry name" value="ATP-grasp"/>
</dbReference>
<dbReference type="InterPro" id="IPR013815">
    <property type="entry name" value="ATP_grasp_subdomain_1"/>
</dbReference>
<dbReference type="InterPro" id="IPR000291">
    <property type="entry name" value="D-Ala_lig_Van_CS"/>
</dbReference>
<dbReference type="InterPro" id="IPR005905">
    <property type="entry name" value="D_ala_D_ala"/>
</dbReference>
<dbReference type="InterPro" id="IPR011095">
    <property type="entry name" value="Dala_Dala_lig_C"/>
</dbReference>
<dbReference type="InterPro" id="IPR011127">
    <property type="entry name" value="Dala_Dala_lig_N"/>
</dbReference>
<dbReference type="InterPro" id="IPR016185">
    <property type="entry name" value="PreATP-grasp_dom_sf"/>
</dbReference>
<dbReference type="NCBIfam" id="TIGR01205">
    <property type="entry name" value="D_ala_D_alaTIGR"/>
    <property type="match status" value="1"/>
</dbReference>
<dbReference type="NCBIfam" id="NF002378">
    <property type="entry name" value="PRK01372.1"/>
    <property type="match status" value="1"/>
</dbReference>
<dbReference type="PANTHER" id="PTHR23132">
    <property type="entry name" value="D-ALANINE--D-ALANINE LIGASE"/>
    <property type="match status" value="1"/>
</dbReference>
<dbReference type="PANTHER" id="PTHR23132:SF23">
    <property type="entry name" value="D-ALANINE--D-ALANINE LIGASE B"/>
    <property type="match status" value="1"/>
</dbReference>
<dbReference type="Pfam" id="PF07478">
    <property type="entry name" value="Dala_Dala_lig_C"/>
    <property type="match status" value="1"/>
</dbReference>
<dbReference type="Pfam" id="PF01820">
    <property type="entry name" value="Dala_Dala_lig_N"/>
    <property type="match status" value="1"/>
</dbReference>
<dbReference type="PIRSF" id="PIRSF039102">
    <property type="entry name" value="Ddl/VanB"/>
    <property type="match status" value="1"/>
</dbReference>
<dbReference type="SUPFAM" id="SSF56059">
    <property type="entry name" value="Glutathione synthetase ATP-binding domain-like"/>
    <property type="match status" value="1"/>
</dbReference>
<dbReference type="SUPFAM" id="SSF52440">
    <property type="entry name" value="PreATP-grasp domain"/>
    <property type="match status" value="1"/>
</dbReference>
<dbReference type="PROSITE" id="PS50975">
    <property type="entry name" value="ATP_GRASP"/>
    <property type="match status" value="1"/>
</dbReference>
<dbReference type="PROSITE" id="PS00843">
    <property type="entry name" value="DALA_DALA_LIGASE_1"/>
    <property type="match status" value="1"/>
</dbReference>
<dbReference type="PROSITE" id="PS00844">
    <property type="entry name" value="DALA_DALA_LIGASE_2"/>
    <property type="match status" value="1"/>
</dbReference>
<proteinExistence type="inferred from homology"/>
<feature type="chain" id="PRO_0000177790" description="D-alanine--D-alanine ligase">
    <location>
        <begin position="1"/>
        <end position="316"/>
    </location>
</feature>
<feature type="domain" description="ATP-grasp" evidence="2">
    <location>
        <begin position="104"/>
        <end position="303"/>
    </location>
</feature>
<feature type="binding site" evidence="2">
    <location>
        <begin position="130"/>
        <end position="185"/>
    </location>
    <ligand>
        <name>ATP</name>
        <dbReference type="ChEBI" id="CHEBI:30616"/>
    </ligand>
</feature>
<feature type="binding site" evidence="2">
    <location>
        <position position="257"/>
    </location>
    <ligand>
        <name>Mg(2+)</name>
        <dbReference type="ChEBI" id="CHEBI:18420"/>
        <label>1</label>
    </ligand>
</feature>
<feature type="binding site" evidence="2">
    <location>
        <position position="270"/>
    </location>
    <ligand>
        <name>Mg(2+)</name>
        <dbReference type="ChEBI" id="CHEBI:18420"/>
        <label>1</label>
    </ligand>
</feature>
<feature type="binding site" evidence="2">
    <location>
        <position position="270"/>
    </location>
    <ligand>
        <name>Mg(2+)</name>
        <dbReference type="ChEBI" id="CHEBI:18420"/>
        <label>2</label>
    </ligand>
</feature>
<feature type="binding site" evidence="2">
    <location>
        <position position="272"/>
    </location>
    <ligand>
        <name>Mg(2+)</name>
        <dbReference type="ChEBI" id="CHEBI:18420"/>
        <label>2</label>
    </ligand>
</feature>
<keyword id="KW-0067">ATP-binding</keyword>
<keyword id="KW-0133">Cell shape</keyword>
<keyword id="KW-0961">Cell wall biogenesis/degradation</keyword>
<keyword id="KW-0963">Cytoplasm</keyword>
<keyword id="KW-0436">Ligase</keyword>
<keyword id="KW-0460">Magnesium</keyword>
<keyword id="KW-0464">Manganese</keyword>
<keyword id="KW-0479">Metal-binding</keyword>
<keyword id="KW-0547">Nucleotide-binding</keyword>
<keyword id="KW-0573">Peptidoglycan synthesis</keyword>
<name>DDL_BORPA</name>